<organism>
    <name type="scientific">Bos taurus</name>
    <name type="common">Bovine</name>
    <dbReference type="NCBI Taxonomy" id="9913"/>
    <lineage>
        <taxon>Eukaryota</taxon>
        <taxon>Metazoa</taxon>
        <taxon>Chordata</taxon>
        <taxon>Craniata</taxon>
        <taxon>Vertebrata</taxon>
        <taxon>Euteleostomi</taxon>
        <taxon>Mammalia</taxon>
        <taxon>Eutheria</taxon>
        <taxon>Laurasiatheria</taxon>
        <taxon>Artiodactyla</taxon>
        <taxon>Ruminantia</taxon>
        <taxon>Pecora</taxon>
        <taxon>Bovidae</taxon>
        <taxon>Bovinae</taxon>
        <taxon>Bos</taxon>
    </lineage>
</organism>
<protein>
    <recommendedName>
        <fullName>Pyruvate dehydrogenase E1 component subunit alpha, somatic form, mitochondrial</fullName>
        <ecNumber>1.2.4.1</ecNumber>
    </recommendedName>
    <alternativeName>
        <fullName>PDHE1-A type I</fullName>
    </alternativeName>
</protein>
<comment type="function">
    <text evidence="1">The pyruvate dehydrogenase complex catalyzes the overall conversion of pyruvate to acetyl-CoA and CO(2), and thereby links the glycolytic pathway to the tricarboxylic cycle.</text>
</comment>
<comment type="catalytic activity">
    <reaction>
        <text>N(6)-[(R)-lipoyl]-L-lysyl-[protein] + pyruvate + H(+) = N(6)-[(R)-S(8)-acetyldihydrolipoyl]-L-lysyl-[protein] + CO2</text>
        <dbReference type="Rhea" id="RHEA:19189"/>
        <dbReference type="Rhea" id="RHEA-COMP:10474"/>
        <dbReference type="Rhea" id="RHEA-COMP:10478"/>
        <dbReference type="ChEBI" id="CHEBI:15361"/>
        <dbReference type="ChEBI" id="CHEBI:15378"/>
        <dbReference type="ChEBI" id="CHEBI:16526"/>
        <dbReference type="ChEBI" id="CHEBI:83099"/>
        <dbReference type="ChEBI" id="CHEBI:83111"/>
        <dbReference type="EC" id="1.2.4.1"/>
    </reaction>
</comment>
<comment type="cofactor">
    <cofactor evidence="2">
        <name>thiamine diphosphate</name>
        <dbReference type="ChEBI" id="CHEBI:58937"/>
    </cofactor>
    <cofactor evidence="2">
        <name>Mg(2+)</name>
        <dbReference type="ChEBI" id="CHEBI:18420"/>
    </cofactor>
</comment>
<comment type="activity regulation">
    <text evidence="1">Pyruvate dehydrogenase activity is inhibited by phosphorylation of PDHA1; it is reactivated by dephosphorylation.</text>
</comment>
<comment type="subunit">
    <text evidence="1">Heterotetramer of two PDHA1 and two PDHB subunits. The heterotetramer interacts with DLAT, and is part of the multimeric pyruvate dehydrogenase complex that contains multiple copies of pyruvate dehydrogenase (E1), dihydrolipoamide acetyltransferase (DLAT, E2) and lipoamide dehydrogenase (DLD, E3). These subunits are bound to an inner core composed of about 48 DLAT and 12 PDHX molecules (By similarity).</text>
</comment>
<comment type="subcellular location">
    <subcellularLocation>
        <location evidence="1">Mitochondrion matrix</location>
    </subcellularLocation>
</comment>
<comment type="PTM">
    <text evidence="1">Phosphorylation at Ser-232, Ser-293 and Ser-300 by PDK family kinases inactivates the enzyme; for this phosphorylation at a single site is sufficient. Phosphorylation at Ser-293 interferes with access to active site, and thereby inactivates the enzyme. Dephosphorylation at all three sites, i.e. at Ser-232, Ser-293 and Ser-300, is required for reactivation (By similarity).</text>
</comment>
<comment type="PTM">
    <text evidence="1">Acetylation alters the phosphorylation pattern. Deacetylated by SIRT3 (By similarity).</text>
</comment>
<sequence length="390" mass="43388">MRKMLAAVSRVLSGVAQKPASRVLVASRHFANDATFEIKKCDLHRLEEGPPVTTVLTREDGLKYYRMMQTVRRMELKADQLYKQKIIRGFCHLCDGQEACCVGLEAGINPTDHLITAYRAHGFTFTRGLSVREILAELTGRRGGCAKGKGGSMHMYAKNFYGGNGIVGAQVPLGAGIALACKYNGKDEVCLTLYGDGAANQGQIFEAYNMAALWKLPCIFICENNRYGMGTSVERAAASTDYYKRGDFIPGLRVDGMDILCVREATKFAAAYCRSGKGPILMELQTYRYHGHSMSDPGVSYRTREEIQEVRSKSDPIMLLKDRMVNSNLASVEELKEIDVEVRKEIEDAAQFATADPEPPLEELGYHIYCNDPPFEVRGANQWIKFKSIS</sequence>
<accession>A7MB35</accession>
<gene>
    <name type="primary">PDHA1</name>
</gene>
<keyword id="KW-0007">Acetylation</keyword>
<keyword id="KW-0119">Carbohydrate metabolism</keyword>
<keyword id="KW-0313">Glucose metabolism</keyword>
<keyword id="KW-0460">Magnesium</keyword>
<keyword id="KW-0479">Metal-binding</keyword>
<keyword id="KW-0496">Mitochondrion</keyword>
<keyword id="KW-0560">Oxidoreductase</keyword>
<keyword id="KW-0597">Phosphoprotein</keyword>
<keyword id="KW-0670">Pyruvate</keyword>
<keyword id="KW-1185">Reference proteome</keyword>
<keyword id="KW-0786">Thiamine pyrophosphate</keyword>
<keyword id="KW-0809">Transit peptide</keyword>
<keyword id="KW-0816">Tricarboxylic acid cycle</keyword>
<reference key="1">
    <citation type="submission" date="2007-07" db="EMBL/GenBank/DDBJ databases">
        <authorList>
            <consortium name="NIH - Mammalian Gene Collection (MGC) project"/>
        </authorList>
    </citation>
    <scope>NUCLEOTIDE SEQUENCE [LARGE SCALE MRNA]</scope>
    <source>
        <strain>Hereford</strain>
        <tissue>Hypothalamus</tissue>
    </source>
</reference>
<name>ODPA_BOVIN</name>
<dbReference type="EC" id="1.2.4.1"/>
<dbReference type="EMBL" id="BC151313">
    <property type="protein sequence ID" value="AAI51314.1"/>
    <property type="molecule type" value="mRNA"/>
</dbReference>
<dbReference type="RefSeq" id="NP_001094516.1">
    <property type="nucleotide sequence ID" value="NM_001101046.2"/>
</dbReference>
<dbReference type="SMR" id="A7MB35"/>
<dbReference type="CORUM" id="A7MB35"/>
<dbReference type="FunCoup" id="A7MB35">
    <property type="interactions" value="1706"/>
</dbReference>
<dbReference type="STRING" id="9913.ENSBTAP00000052439"/>
<dbReference type="PaxDb" id="9913-ENSBTAP00000052439"/>
<dbReference type="PeptideAtlas" id="A7MB35"/>
<dbReference type="Ensembl" id="ENSBTAT00000057115.3">
    <property type="protein sequence ID" value="ENSBTAP00000052439.3"/>
    <property type="gene ID" value="ENSBTAG00000019852.7"/>
</dbReference>
<dbReference type="GeneID" id="407109"/>
<dbReference type="KEGG" id="bta:407109"/>
<dbReference type="CTD" id="5160"/>
<dbReference type="VGNC" id="VGNC:56948">
    <property type="gene designation" value="PDHA1"/>
</dbReference>
<dbReference type="eggNOG" id="KOG0225">
    <property type="taxonomic scope" value="Eukaryota"/>
</dbReference>
<dbReference type="GeneTree" id="ENSGT00530000063174"/>
<dbReference type="HOGENOM" id="CLU_029393_5_2_1"/>
<dbReference type="InParanoid" id="A7MB35"/>
<dbReference type="OrthoDB" id="10256198at2759"/>
<dbReference type="TreeFam" id="TF300742"/>
<dbReference type="Proteomes" id="UP000009136">
    <property type="component" value="Chromosome X"/>
</dbReference>
<dbReference type="GO" id="GO:0005759">
    <property type="term" value="C:mitochondrial matrix"/>
    <property type="evidence" value="ECO:0007669"/>
    <property type="project" value="UniProtKB-SubCell"/>
</dbReference>
<dbReference type="GO" id="GO:0005730">
    <property type="term" value="C:nucleolus"/>
    <property type="evidence" value="ECO:0007669"/>
    <property type="project" value="Ensembl"/>
</dbReference>
<dbReference type="GO" id="GO:0045254">
    <property type="term" value="C:pyruvate dehydrogenase complex"/>
    <property type="evidence" value="ECO:0000250"/>
    <property type="project" value="UniProtKB"/>
</dbReference>
<dbReference type="GO" id="GO:0046872">
    <property type="term" value="F:metal ion binding"/>
    <property type="evidence" value="ECO:0007669"/>
    <property type="project" value="UniProtKB-KW"/>
</dbReference>
<dbReference type="GO" id="GO:0004739">
    <property type="term" value="F:pyruvate dehydrogenase (acetyl-transferring) activity"/>
    <property type="evidence" value="ECO:0000318"/>
    <property type="project" value="GO_Central"/>
</dbReference>
<dbReference type="GO" id="GO:0034604">
    <property type="term" value="F:pyruvate dehydrogenase (NAD+) activity"/>
    <property type="evidence" value="ECO:0007669"/>
    <property type="project" value="Ensembl"/>
</dbReference>
<dbReference type="GO" id="GO:0006006">
    <property type="term" value="P:glucose metabolic process"/>
    <property type="evidence" value="ECO:0007669"/>
    <property type="project" value="UniProtKB-KW"/>
</dbReference>
<dbReference type="GO" id="GO:0006086">
    <property type="term" value="P:pyruvate decarboxylation to acetyl-CoA"/>
    <property type="evidence" value="ECO:0000250"/>
    <property type="project" value="UniProtKB"/>
</dbReference>
<dbReference type="GO" id="GO:0006099">
    <property type="term" value="P:tricarboxylic acid cycle"/>
    <property type="evidence" value="ECO:0007669"/>
    <property type="project" value="UniProtKB-KW"/>
</dbReference>
<dbReference type="CDD" id="cd02000">
    <property type="entry name" value="TPP_E1_PDC_ADC_BCADC"/>
    <property type="match status" value="1"/>
</dbReference>
<dbReference type="FunFam" id="3.40.50.970:FF:000020">
    <property type="entry name" value="Pyruvate dehydrogenase E1 component subunit alpha, mitochondrial"/>
    <property type="match status" value="1"/>
</dbReference>
<dbReference type="Gene3D" id="3.40.50.970">
    <property type="match status" value="1"/>
</dbReference>
<dbReference type="InterPro" id="IPR001017">
    <property type="entry name" value="DH_E1"/>
</dbReference>
<dbReference type="InterPro" id="IPR050642">
    <property type="entry name" value="PDH_E1_Alpha_Subunit"/>
</dbReference>
<dbReference type="InterPro" id="IPR017597">
    <property type="entry name" value="Pyrv_DH_E1_asu_subgrp-y"/>
</dbReference>
<dbReference type="InterPro" id="IPR029061">
    <property type="entry name" value="THDP-binding"/>
</dbReference>
<dbReference type="NCBIfam" id="TIGR03182">
    <property type="entry name" value="PDH_E1_alph_y"/>
    <property type="match status" value="1"/>
</dbReference>
<dbReference type="PANTHER" id="PTHR11516:SF60">
    <property type="entry name" value="PYRUVATE DEHYDROGENASE E1 COMPONENT SUBUNIT ALPHA"/>
    <property type="match status" value="1"/>
</dbReference>
<dbReference type="PANTHER" id="PTHR11516">
    <property type="entry name" value="PYRUVATE DEHYDROGENASE E1 COMPONENT, ALPHA SUBUNIT BACTERIAL AND ORGANELLAR"/>
    <property type="match status" value="1"/>
</dbReference>
<dbReference type="Pfam" id="PF00676">
    <property type="entry name" value="E1_dh"/>
    <property type="match status" value="1"/>
</dbReference>
<dbReference type="SUPFAM" id="SSF52518">
    <property type="entry name" value="Thiamin diphosphate-binding fold (THDP-binding)"/>
    <property type="match status" value="1"/>
</dbReference>
<evidence type="ECO:0000250" key="1"/>
<evidence type="ECO:0000250" key="2">
    <source>
        <dbReference type="UniProtKB" id="P08559"/>
    </source>
</evidence>
<evidence type="ECO:0000250" key="3">
    <source>
        <dbReference type="UniProtKB" id="P35486"/>
    </source>
</evidence>
<feature type="transit peptide" description="Mitochondrion" evidence="1">
    <location>
        <begin position="1"/>
        <end position="29"/>
    </location>
</feature>
<feature type="chain" id="PRO_0000329312" description="Pyruvate dehydrogenase E1 component subunit alpha, somatic form, mitochondrial">
    <location>
        <begin position="30"/>
        <end position="390"/>
    </location>
</feature>
<feature type="binding site" evidence="2">
    <location>
        <position position="92"/>
    </location>
    <ligand>
        <name>pyruvate</name>
        <dbReference type="ChEBI" id="CHEBI:15361"/>
    </ligand>
</feature>
<feature type="binding site" evidence="2">
    <location>
        <position position="118"/>
    </location>
    <ligand>
        <name>pyruvate</name>
        <dbReference type="ChEBI" id="CHEBI:15361"/>
    </ligand>
</feature>
<feature type="binding site" evidence="2">
    <location>
        <position position="118"/>
    </location>
    <ligand>
        <name>thiamine diphosphate</name>
        <dbReference type="ChEBI" id="CHEBI:58937"/>
        <note>ligand shared with beta subunit</note>
    </ligand>
</feature>
<feature type="binding site" evidence="2">
    <location>
        <position position="119"/>
    </location>
    <ligand>
        <name>pyruvate</name>
        <dbReference type="ChEBI" id="CHEBI:15361"/>
    </ligand>
</feature>
<feature type="binding site" evidence="2">
    <location>
        <position position="119"/>
    </location>
    <ligand>
        <name>thiamine diphosphate</name>
        <dbReference type="ChEBI" id="CHEBI:58937"/>
        <note>ligand shared with beta subunit</note>
    </ligand>
</feature>
<feature type="binding site" evidence="2">
    <location>
        <position position="157"/>
    </location>
    <ligand>
        <name>pyruvate</name>
        <dbReference type="ChEBI" id="CHEBI:15361"/>
    </ligand>
</feature>
<feature type="binding site" evidence="2">
    <location>
        <position position="165"/>
    </location>
    <ligand>
        <name>pyruvate</name>
        <dbReference type="ChEBI" id="CHEBI:15361"/>
    </ligand>
</feature>
<feature type="binding site" evidence="2">
    <location>
        <position position="165"/>
    </location>
    <ligand>
        <name>thiamine diphosphate</name>
        <dbReference type="ChEBI" id="CHEBI:58937"/>
        <note>ligand shared with beta subunit</note>
    </ligand>
</feature>
<feature type="binding site" evidence="2">
    <location>
        <position position="167"/>
    </location>
    <ligand>
        <name>pyruvate</name>
        <dbReference type="ChEBI" id="CHEBI:15361"/>
    </ligand>
</feature>
<feature type="binding site" evidence="2">
    <location>
        <position position="167"/>
    </location>
    <ligand>
        <name>thiamine diphosphate</name>
        <dbReference type="ChEBI" id="CHEBI:58937"/>
        <note>ligand shared with beta subunit</note>
    </ligand>
</feature>
<feature type="binding site" evidence="2">
    <location>
        <position position="196"/>
    </location>
    <ligand>
        <name>Mg(2+)</name>
        <dbReference type="ChEBI" id="CHEBI:18420"/>
    </ligand>
</feature>
<feature type="binding site" evidence="2">
    <location>
        <position position="196"/>
    </location>
    <ligand>
        <name>pyruvate</name>
        <dbReference type="ChEBI" id="CHEBI:15361"/>
    </ligand>
</feature>
<feature type="binding site" evidence="2">
    <location>
        <position position="196"/>
    </location>
    <ligand>
        <name>thiamine diphosphate</name>
        <dbReference type="ChEBI" id="CHEBI:58937"/>
        <note>ligand shared with beta subunit</note>
    </ligand>
</feature>
<feature type="binding site" evidence="2">
    <location>
        <position position="197"/>
    </location>
    <ligand>
        <name>pyruvate</name>
        <dbReference type="ChEBI" id="CHEBI:15361"/>
    </ligand>
</feature>
<feature type="binding site" evidence="2">
    <location>
        <position position="197"/>
    </location>
    <ligand>
        <name>thiamine diphosphate</name>
        <dbReference type="ChEBI" id="CHEBI:58937"/>
        <note>ligand shared with beta subunit</note>
    </ligand>
</feature>
<feature type="binding site" evidence="2">
    <location>
        <position position="198"/>
    </location>
    <ligand>
        <name>pyruvate</name>
        <dbReference type="ChEBI" id="CHEBI:15361"/>
    </ligand>
</feature>
<feature type="binding site" evidence="2">
    <location>
        <position position="198"/>
    </location>
    <ligand>
        <name>thiamine diphosphate</name>
        <dbReference type="ChEBI" id="CHEBI:58937"/>
        <note>ligand shared with beta subunit</note>
    </ligand>
</feature>
<feature type="binding site" evidence="2">
    <location>
        <position position="225"/>
    </location>
    <ligand>
        <name>Mg(2+)</name>
        <dbReference type="ChEBI" id="CHEBI:18420"/>
    </ligand>
</feature>
<feature type="binding site" evidence="2">
    <location>
        <position position="225"/>
    </location>
    <ligand>
        <name>pyruvate</name>
        <dbReference type="ChEBI" id="CHEBI:15361"/>
    </ligand>
</feature>
<feature type="binding site" evidence="2">
    <location>
        <position position="225"/>
    </location>
    <ligand>
        <name>thiamine diphosphate</name>
        <dbReference type="ChEBI" id="CHEBI:58937"/>
        <note>ligand shared with beta subunit</note>
    </ligand>
</feature>
<feature type="binding site" evidence="2">
    <location>
        <position position="227"/>
    </location>
    <ligand>
        <name>Mg(2+)</name>
        <dbReference type="ChEBI" id="CHEBI:18420"/>
    </ligand>
</feature>
<feature type="binding site" evidence="2">
    <location>
        <position position="227"/>
    </location>
    <ligand>
        <name>pyruvate</name>
        <dbReference type="ChEBI" id="CHEBI:15361"/>
    </ligand>
</feature>
<feature type="binding site" evidence="2">
    <location>
        <position position="292"/>
    </location>
    <ligand>
        <name>thiamine diphosphate</name>
        <dbReference type="ChEBI" id="CHEBI:58937"/>
        <note>ligand shared with beta subunit</note>
    </ligand>
</feature>
<feature type="modified residue" description="N6-acetyllysine; alternate" evidence="3">
    <location>
        <position position="63"/>
    </location>
</feature>
<feature type="modified residue" description="N6-succinyllysine; alternate" evidence="3">
    <location>
        <position position="63"/>
    </location>
</feature>
<feature type="modified residue" description="Phosphoserine; by PDK1" evidence="2">
    <location>
        <position position="232"/>
    </location>
</feature>
<feature type="modified residue" description="N6-acetyllysine; alternate" evidence="3">
    <location>
        <position position="244"/>
    </location>
</feature>
<feature type="modified residue" description="N6-succinyllysine; alternate" evidence="3">
    <location>
        <position position="244"/>
    </location>
</feature>
<feature type="modified residue" description="N6-acetyllysine" evidence="3">
    <location>
        <position position="267"/>
    </location>
</feature>
<feature type="modified residue" description="N6-succinyllysine" evidence="3">
    <location>
        <position position="277"/>
    </location>
</feature>
<feature type="modified residue" description="Phosphoserine; by PDK1, PDK2, PDK3 and PDK4" evidence="2">
    <location>
        <position position="293"/>
    </location>
</feature>
<feature type="modified residue" description="Phosphoserine" evidence="3">
    <location>
        <position position="295"/>
    </location>
</feature>
<feature type="modified residue" description="Phosphoserine; by PDK1, PDK2, PDK3 and PDK4" evidence="2">
    <location>
        <position position="300"/>
    </location>
</feature>
<feature type="modified residue" description="Phosphotyrosine" evidence="3">
    <location>
        <position position="301"/>
    </location>
</feature>
<feature type="modified residue" description="N6-acetyllysine; alternate" evidence="3">
    <location>
        <position position="313"/>
    </location>
</feature>
<feature type="modified residue" description="N6-succinyllysine; alternate" evidence="3">
    <location>
        <position position="313"/>
    </location>
</feature>
<feature type="modified residue" description="N6-acetyllysine" evidence="2">
    <location>
        <position position="321"/>
    </location>
</feature>
<feature type="modified residue" description="N6-acetyllysine" evidence="3">
    <location>
        <position position="336"/>
    </location>
</feature>
<feature type="modified residue" description="N6-succinyllysine" evidence="3">
    <location>
        <position position="385"/>
    </location>
</feature>
<proteinExistence type="evidence at transcript level"/>